<proteinExistence type="evidence at transcript level"/>
<evidence type="ECO:0000255" key="1"/>
<evidence type="ECO:0000269" key="2">
    <source>
    </source>
</evidence>
<evidence type="ECO:0000269" key="3">
    <source>
    </source>
</evidence>
<evidence type="ECO:0000269" key="4">
    <source>
    </source>
</evidence>
<evidence type="ECO:0000305" key="5"/>
<dbReference type="EMBL" id="Z37092">
    <property type="protein sequence ID" value="CAA85461.2"/>
    <property type="molecule type" value="Genomic_DNA"/>
</dbReference>
<dbReference type="PIR" id="T22192">
    <property type="entry name" value="T22192"/>
</dbReference>
<dbReference type="RefSeq" id="NP_496348.2">
    <property type="nucleotide sequence ID" value="NM_063947.2"/>
</dbReference>
<dbReference type="FunCoup" id="Q20411">
    <property type="interactions" value="6"/>
</dbReference>
<dbReference type="STRING" id="6239.F44F4.13.1"/>
<dbReference type="PaxDb" id="6239-F44F4.13"/>
<dbReference type="EnsemblMetazoa" id="F44F4.13.1">
    <property type="protein sequence ID" value="F44F4.13.1"/>
    <property type="gene ID" value="WBGene00005037"/>
</dbReference>
<dbReference type="GeneID" id="191782"/>
<dbReference type="KEGG" id="cel:CELE_F44F4.13"/>
<dbReference type="UCSC" id="F44F4.13">
    <property type="organism name" value="c. elegans"/>
</dbReference>
<dbReference type="AGR" id="WB:WBGene00005037"/>
<dbReference type="CTD" id="191782"/>
<dbReference type="WormBase" id="F44F4.13">
    <property type="protein sequence ID" value="CE33395"/>
    <property type="gene ID" value="WBGene00005037"/>
    <property type="gene designation" value="sra-11"/>
</dbReference>
<dbReference type="eggNOG" id="ENOG502TFIZ">
    <property type="taxonomic scope" value="Eukaryota"/>
</dbReference>
<dbReference type="GeneTree" id="ENSGT00970000195848"/>
<dbReference type="HOGENOM" id="CLU_048025_0_1_1"/>
<dbReference type="InParanoid" id="Q20411"/>
<dbReference type="OMA" id="QTAYIVL"/>
<dbReference type="OrthoDB" id="5792629at2759"/>
<dbReference type="PhylomeDB" id="Q20411"/>
<dbReference type="PRO" id="PR:Q20411"/>
<dbReference type="Proteomes" id="UP000001940">
    <property type="component" value="Chromosome II"/>
</dbReference>
<dbReference type="GO" id="GO:0016020">
    <property type="term" value="C:membrane"/>
    <property type="evidence" value="ECO:0000304"/>
    <property type="project" value="UniProtKB"/>
</dbReference>
<dbReference type="GO" id="GO:0004930">
    <property type="term" value="F:G protein-coupled receptor activity"/>
    <property type="evidence" value="ECO:0007669"/>
    <property type="project" value="InterPro"/>
</dbReference>
<dbReference type="GO" id="GO:0004984">
    <property type="term" value="F:olfactory receptor activity"/>
    <property type="evidence" value="ECO:0000318"/>
    <property type="project" value="GO_Central"/>
</dbReference>
<dbReference type="GO" id="GO:0004888">
    <property type="term" value="F:transmembrane signaling receptor activity"/>
    <property type="evidence" value="ECO:0000304"/>
    <property type="project" value="UniProtKB"/>
</dbReference>
<dbReference type="GO" id="GO:0050907">
    <property type="term" value="P:detection of chemical stimulus involved in sensory perception"/>
    <property type="evidence" value="ECO:0000315"/>
    <property type="project" value="UniProtKB"/>
</dbReference>
<dbReference type="GO" id="GO:0008355">
    <property type="term" value="P:olfactory learning"/>
    <property type="evidence" value="ECO:0000315"/>
    <property type="project" value="UniProtKB"/>
</dbReference>
<dbReference type="InterPro" id="IPR000344">
    <property type="entry name" value="7TM_GPCR_serpentine_rcpt_Sra"/>
</dbReference>
<dbReference type="InterPro" id="IPR051080">
    <property type="entry name" value="Nematode_rcpt-like_serp_alpha"/>
</dbReference>
<dbReference type="PANTHER" id="PTHR31357">
    <property type="entry name" value="SERPENTINE RECEPTOR CLASS ALPHA-10"/>
    <property type="match status" value="1"/>
</dbReference>
<dbReference type="PANTHER" id="PTHR31357:SF11">
    <property type="entry name" value="SERPENTINE RECEPTOR CLASS ALPHA-11"/>
    <property type="match status" value="1"/>
</dbReference>
<dbReference type="Pfam" id="PF02117">
    <property type="entry name" value="7TM_GPCR_Sra"/>
    <property type="match status" value="1"/>
</dbReference>
<dbReference type="PRINTS" id="PR00697">
    <property type="entry name" value="TMPROTEINSRA"/>
</dbReference>
<feature type="chain" id="PRO_0000104477" description="Serpentine receptor class alpha-11">
    <location>
        <begin position="1"/>
        <end position="334"/>
    </location>
</feature>
<feature type="topological domain" description="Extracellular" evidence="1">
    <location>
        <begin position="1"/>
        <end position="23"/>
    </location>
</feature>
<feature type="transmembrane region" description="Helical; Name=1" evidence="1">
    <location>
        <begin position="24"/>
        <end position="44"/>
    </location>
</feature>
<feature type="topological domain" description="Cytoplasmic" evidence="1">
    <location>
        <begin position="45"/>
        <end position="57"/>
    </location>
</feature>
<feature type="transmembrane region" description="Helical; Name=2" evidence="1">
    <location>
        <begin position="58"/>
        <end position="80"/>
    </location>
</feature>
<feature type="topological domain" description="Extracellular" evidence="1">
    <location>
        <begin position="81"/>
        <end position="105"/>
    </location>
</feature>
<feature type="transmembrane region" description="Helical; Name=3" evidence="1">
    <location>
        <begin position="106"/>
        <end position="126"/>
    </location>
</feature>
<feature type="topological domain" description="Cytoplasmic" evidence="1">
    <location>
        <begin position="127"/>
        <end position="145"/>
    </location>
</feature>
<feature type="transmembrane region" description="Helical; Name=4" evidence="1">
    <location>
        <begin position="146"/>
        <end position="166"/>
    </location>
</feature>
<feature type="topological domain" description="Extracellular" evidence="1">
    <location>
        <begin position="167"/>
        <end position="191"/>
    </location>
</feature>
<feature type="transmembrane region" description="Helical; Name=5" evidence="1">
    <location>
        <begin position="192"/>
        <end position="212"/>
    </location>
</feature>
<feature type="topological domain" description="Cytoplasmic" evidence="1">
    <location>
        <begin position="213"/>
        <end position="239"/>
    </location>
</feature>
<feature type="transmembrane region" description="Helical; Name=6" evidence="1">
    <location>
        <begin position="240"/>
        <end position="260"/>
    </location>
</feature>
<feature type="topological domain" description="Extracellular" evidence="1">
    <location>
        <begin position="261"/>
        <end position="277"/>
    </location>
</feature>
<feature type="transmembrane region" description="Helical; Name=7" evidence="1">
    <location>
        <begin position="278"/>
        <end position="298"/>
    </location>
</feature>
<feature type="topological domain" description="Cytoplasmic" evidence="1">
    <location>
        <begin position="299"/>
        <end position="334"/>
    </location>
</feature>
<accession>Q20411</accession>
<reference key="1">
    <citation type="journal article" date="1998" name="Science">
        <title>Genome sequence of the nematode C. elegans: a platform for investigating biology.</title>
        <authorList>
            <consortium name="The C. elegans sequencing consortium"/>
        </authorList>
    </citation>
    <scope>NUCLEOTIDE SEQUENCE [LARGE SCALE GENOMIC DNA]</scope>
    <scope>ALTERNATIVE SPLICING</scope>
    <source>
        <strain>Bristol N2</strain>
    </source>
</reference>
<reference key="2">
    <citation type="journal article" date="1995" name="Cell">
        <title>Divergent seven transmembrane receptors are candidate chemosensory receptors in C. elegans.</title>
        <authorList>
            <person name="Troemel E.R."/>
            <person name="Chou J.H."/>
            <person name="Dwyer N.D."/>
            <person name="Colbert H.A."/>
            <person name="Bargmann C.I."/>
        </authorList>
    </citation>
    <scope>TISSUE SPECIFICITY</scope>
</reference>
<reference key="3">
    <citation type="journal article" date="2001" name="Development">
        <title>A regulatory cascade of three homeobox genes, ceh-10, ttx-3 and ceh-23, controls cell fate specification of a defined interneuron class in C. elegans.</title>
        <authorList>
            <person name="Altun-Gultekin Z."/>
            <person name="Andachi Y."/>
            <person name="Tsalik E.L."/>
            <person name="Pilgrim D."/>
            <person name="Kohara Y."/>
            <person name="Hobert O."/>
        </authorList>
    </citation>
    <scope>TISSUE SPECIFICITY</scope>
</reference>
<reference key="4">
    <citation type="journal article" date="2005" name="Science">
        <title>An interneuronal chemoreceptor required for olfactory imprinting in C. elegans.</title>
        <authorList>
            <person name="Remy J.J."/>
            <person name="Hobert O."/>
        </authorList>
    </citation>
    <scope>FUNCTION</scope>
    <scope>DISRUPTION PHENOTYPE</scope>
</reference>
<protein>
    <recommendedName>
        <fullName>Serpentine receptor class alpha-11</fullName>
        <shortName>Protein sra-11</shortName>
    </recommendedName>
</protein>
<comment type="function">
    <text evidence="3">A G protein-coupled receptor required for olfactory imprinting a requisite in ordorant response such as benzaldehyde and isoamylalcohol.</text>
</comment>
<comment type="subcellular location">
    <subcellularLocation>
        <location evidence="5">Membrane</location>
        <topology evidence="5">Multi-pass membrane protein</topology>
    </subcellularLocation>
</comment>
<comment type="tissue specificity">
    <text evidence="2 4">Expressed in interneurons AIY and AVB in L1 larvae. In adults, strong expression is seen in AIY and AIA but only weak expression in AVB.</text>
</comment>
<comment type="disruption phenotype">
    <text evidence="3">Worms exhibit olfactory imprinting to benzaldehyde and isoamylalcohol.</text>
</comment>
<comment type="similarity">
    <text evidence="5">Belongs to the nematode receptor-like protein sra family.</text>
</comment>
<keyword id="KW-0472">Membrane</keyword>
<keyword id="KW-0552">Olfaction</keyword>
<keyword id="KW-0675">Receptor</keyword>
<keyword id="KW-1185">Reference proteome</keyword>
<keyword id="KW-0716">Sensory transduction</keyword>
<keyword id="KW-0812">Transmembrane</keyword>
<keyword id="KW-1133">Transmembrane helix</keyword>
<sequence length="334" mass="38358">MTTNNPVCASDAHMEMYSSKLYTSALFLNLIIATTSMILTGFAIQKLFMESIINISTRMFLFCGLMCCSLHQTAYIVLRIQVIYQVFFKLSEPCNLYYPAIDCKYVTFSLVAGNTGMIFIQSAMTIDRIFATIFPKLWPKLKYWPGVVLSILMIACNYANVQIIFWGDPLTEYVPTCGQFPSKSVNRFQTFLAIALYMSIAHMVINVIILYINVLQDRQQSKSFNVNQRYQSREALKSSQAIFFLSMSQFFACLIYSVFTKVFLEFQLNLSPLQSGLVLALSYTTPYACIAIPSLIIFTFRFIKNQRLRNINELRSQTETGDECMRKIAKIWEK</sequence>
<name>SRA11_CAEEL</name>
<organism>
    <name type="scientific">Caenorhabditis elegans</name>
    <dbReference type="NCBI Taxonomy" id="6239"/>
    <lineage>
        <taxon>Eukaryota</taxon>
        <taxon>Metazoa</taxon>
        <taxon>Ecdysozoa</taxon>
        <taxon>Nematoda</taxon>
        <taxon>Chromadorea</taxon>
        <taxon>Rhabditida</taxon>
        <taxon>Rhabditina</taxon>
        <taxon>Rhabditomorpha</taxon>
        <taxon>Rhabditoidea</taxon>
        <taxon>Rhabditidae</taxon>
        <taxon>Peloderinae</taxon>
        <taxon>Caenorhabditis</taxon>
    </lineage>
</organism>
<gene>
    <name type="primary">sra-11</name>
    <name type="ORF">F44F4.13</name>
</gene>